<feature type="chain" id="PRO_0000391945" description="Ubiquitin-like modifier-activating enzyme 5">
    <location>
        <begin position="1"/>
        <end position="399"/>
    </location>
</feature>
<feature type="active site" description="Glycyl thioester intermediate" evidence="1">
    <location>
        <position position="243"/>
    </location>
</feature>
<feature type="binding site" evidence="1">
    <location>
        <position position="76"/>
    </location>
    <ligand>
        <name>ATP</name>
        <dbReference type="ChEBI" id="CHEBI:30616"/>
    </ligand>
</feature>
<feature type="binding site" evidence="1">
    <location>
        <position position="97"/>
    </location>
    <ligand>
        <name>ATP</name>
        <dbReference type="ChEBI" id="CHEBI:30616"/>
    </ligand>
</feature>
<feature type="binding site" evidence="1">
    <location>
        <position position="120"/>
    </location>
    <ligand>
        <name>ATP</name>
        <dbReference type="ChEBI" id="CHEBI:30616"/>
    </ligand>
</feature>
<feature type="binding site" evidence="1">
    <location>
        <position position="143"/>
    </location>
    <ligand>
        <name>ATP</name>
        <dbReference type="ChEBI" id="CHEBI:30616"/>
    </ligand>
</feature>
<feature type="binding site" evidence="1">
    <location>
        <position position="177"/>
    </location>
    <ligand>
        <name>ATP</name>
        <dbReference type="ChEBI" id="CHEBI:30616"/>
    </ligand>
</feature>
<feature type="binding site" evidence="1">
    <location>
        <position position="219"/>
    </location>
    <ligand>
        <name>Zn(2+)</name>
        <dbReference type="ChEBI" id="CHEBI:29105"/>
    </ligand>
</feature>
<feature type="binding site" evidence="1">
    <location>
        <position position="222"/>
    </location>
    <ligand>
        <name>Zn(2+)</name>
        <dbReference type="ChEBI" id="CHEBI:29105"/>
    </ligand>
</feature>
<feature type="binding site" evidence="1">
    <location>
        <position position="296"/>
    </location>
    <ligand>
        <name>Zn(2+)</name>
        <dbReference type="ChEBI" id="CHEBI:29105"/>
    </ligand>
</feature>
<feature type="binding site" evidence="1">
    <location>
        <position position="301"/>
    </location>
    <ligand>
        <name>Zn(2+)</name>
        <dbReference type="ChEBI" id="CHEBI:29105"/>
    </ligand>
</feature>
<gene>
    <name type="ORF">GI14749</name>
</gene>
<comment type="function">
    <text evidence="1">E1-like enzyme which activates UFM1.</text>
</comment>
<comment type="similarity">
    <text evidence="2">Belongs to the ubiquitin-activating E1 family. UBA5 subfamily.</text>
</comment>
<keyword id="KW-0067">ATP-binding</keyword>
<keyword id="KW-0479">Metal-binding</keyword>
<keyword id="KW-0547">Nucleotide-binding</keyword>
<keyword id="KW-1185">Reference proteome</keyword>
<keyword id="KW-0833">Ubl conjugation pathway</keyword>
<keyword id="KW-0862">Zinc</keyword>
<organism>
    <name type="scientific">Drosophila mojavensis</name>
    <name type="common">Fruit fly</name>
    <dbReference type="NCBI Taxonomy" id="7230"/>
    <lineage>
        <taxon>Eukaryota</taxon>
        <taxon>Metazoa</taxon>
        <taxon>Ecdysozoa</taxon>
        <taxon>Arthropoda</taxon>
        <taxon>Hexapoda</taxon>
        <taxon>Insecta</taxon>
        <taxon>Pterygota</taxon>
        <taxon>Neoptera</taxon>
        <taxon>Endopterygota</taxon>
        <taxon>Diptera</taxon>
        <taxon>Brachycera</taxon>
        <taxon>Muscomorpha</taxon>
        <taxon>Ephydroidea</taxon>
        <taxon>Drosophilidae</taxon>
        <taxon>Drosophila</taxon>
    </lineage>
</organism>
<dbReference type="EMBL" id="CH933810">
    <property type="protein sequence ID" value="EDW07638.1"/>
    <property type="molecule type" value="Genomic_DNA"/>
</dbReference>
<dbReference type="SMR" id="B4L1K2"/>
<dbReference type="FunCoup" id="B4L1K2">
    <property type="interactions" value="2381"/>
</dbReference>
<dbReference type="EnsemblMetazoa" id="FBtr0165474">
    <property type="protein sequence ID" value="FBpp0163966"/>
    <property type="gene ID" value="FBgn0137500"/>
</dbReference>
<dbReference type="EnsemblMetazoa" id="XM_002010285.4">
    <property type="protein sequence ID" value="XP_002010321.1"/>
    <property type="gene ID" value="LOC6584677"/>
</dbReference>
<dbReference type="GeneID" id="6584677"/>
<dbReference type="KEGG" id="dmo:Dmoj_GI14749"/>
<dbReference type="CTD" id="79876"/>
<dbReference type="eggNOG" id="KOG2336">
    <property type="taxonomic scope" value="Eukaryota"/>
</dbReference>
<dbReference type="HOGENOM" id="CLU_013325_0_1_1"/>
<dbReference type="InParanoid" id="B4L1K2"/>
<dbReference type="OMA" id="MNIVKDY"/>
<dbReference type="OrthoDB" id="206053at2759"/>
<dbReference type="PhylomeDB" id="B4L1K2"/>
<dbReference type="Proteomes" id="UP000009192">
    <property type="component" value="Unassembled WGS sequence"/>
</dbReference>
<dbReference type="GO" id="GO:0005829">
    <property type="term" value="C:cytosol"/>
    <property type="evidence" value="ECO:0007669"/>
    <property type="project" value="TreeGrafter"/>
</dbReference>
<dbReference type="GO" id="GO:0005524">
    <property type="term" value="F:ATP binding"/>
    <property type="evidence" value="ECO:0007669"/>
    <property type="project" value="UniProtKB-KW"/>
</dbReference>
<dbReference type="GO" id="GO:0046872">
    <property type="term" value="F:metal ion binding"/>
    <property type="evidence" value="ECO:0007669"/>
    <property type="project" value="UniProtKB-KW"/>
</dbReference>
<dbReference type="GO" id="GO:0071566">
    <property type="term" value="F:UFM1 activating enzyme activity"/>
    <property type="evidence" value="ECO:0007669"/>
    <property type="project" value="TreeGrafter"/>
</dbReference>
<dbReference type="GO" id="GO:0050905">
    <property type="term" value="P:neuromuscular process"/>
    <property type="evidence" value="ECO:0007669"/>
    <property type="project" value="EnsemblMetazoa"/>
</dbReference>
<dbReference type="GO" id="GO:0071569">
    <property type="term" value="P:protein ufmylation"/>
    <property type="evidence" value="ECO:0007669"/>
    <property type="project" value="TreeGrafter"/>
</dbReference>
<dbReference type="CDD" id="cd00757">
    <property type="entry name" value="ThiF_MoeB_HesA_family"/>
    <property type="match status" value="1"/>
</dbReference>
<dbReference type="FunFam" id="3.40.50.720:FF:000066">
    <property type="entry name" value="Putative ubiquitin-like modifier-activating enzyme 5"/>
    <property type="match status" value="1"/>
</dbReference>
<dbReference type="Gene3D" id="3.40.50.720">
    <property type="entry name" value="NAD(P)-binding Rossmann-like Domain"/>
    <property type="match status" value="1"/>
</dbReference>
<dbReference type="InterPro" id="IPR029752">
    <property type="entry name" value="D-isomer_DH_CS1"/>
</dbReference>
<dbReference type="InterPro" id="IPR045886">
    <property type="entry name" value="ThiF/MoeB/HesA"/>
</dbReference>
<dbReference type="InterPro" id="IPR000594">
    <property type="entry name" value="ThiF_NAD_FAD-bd"/>
</dbReference>
<dbReference type="InterPro" id="IPR035985">
    <property type="entry name" value="Ubiquitin-activating_enz"/>
</dbReference>
<dbReference type="PANTHER" id="PTHR10953">
    <property type="entry name" value="UBIQUITIN-ACTIVATING ENZYME E1"/>
    <property type="match status" value="1"/>
</dbReference>
<dbReference type="PANTHER" id="PTHR10953:SF9">
    <property type="entry name" value="UBIQUITIN-LIKE MODIFIER-ACTIVATING ENZYME 5"/>
    <property type="match status" value="1"/>
</dbReference>
<dbReference type="Pfam" id="PF00899">
    <property type="entry name" value="ThiF"/>
    <property type="match status" value="1"/>
</dbReference>
<dbReference type="SUPFAM" id="SSF69572">
    <property type="entry name" value="Activating enzymes of the ubiquitin-like proteins"/>
    <property type="match status" value="1"/>
</dbReference>
<sequence length="399" mass="44006">MSTAIDELQAIIAELKTELEEQKTSTRIARERIERMSAEVVDSNPYSRLMALQRMNIVKDYERIRDKAVAIVGVGGVGSVTADMLTRCGIGKLILFDYDKVELANMNRLFFTPDQAGLSKVEAAARTLSFINPDVVIETHNYNITTVENFDKFLTTISESGLQKGQPVDLVLSCVDNFEARMAINAACNENNLNWFESGVSENAVSGHIQFIRPGETACFACAPPLVVAENIDERTLKREGVCAASLPTTMGITAGLLVQNALKYLLNFGEVSDYLGYNALNDFFPKMTLKPNAECDDRYCLQRQKEFQARPQPKEQQIDEVVSNEPLHASNDWGIELVAEDAPVEQQTTNTTNVASGLRLAYEAPDKVDVNQSESAAVVNAGLPETSLDDLMAQMKSM</sequence>
<proteinExistence type="inferred from homology"/>
<protein>
    <recommendedName>
        <fullName>Ubiquitin-like modifier-activating enzyme 5</fullName>
        <shortName>Ubiquitin-activating enzyme 5</shortName>
    </recommendedName>
</protein>
<reference key="1">
    <citation type="journal article" date="2007" name="Nature">
        <title>Evolution of genes and genomes on the Drosophila phylogeny.</title>
        <authorList>
            <consortium name="Drosophila 12 genomes consortium"/>
        </authorList>
    </citation>
    <scope>NUCLEOTIDE SEQUENCE [LARGE SCALE GENOMIC DNA]</scope>
    <source>
        <strain>Tucson 15081-1352.22</strain>
    </source>
</reference>
<name>UBA5_DROMO</name>
<evidence type="ECO:0000250" key="1"/>
<evidence type="ECO:0000305" key="2"/>
<accession>B4L1K2</accession>